<proteinExistence type="inferred from homology"/>
<reference key="1">
    <citation type="journal article" date="2007" name="PLoS Genet.">
        <title>The complete genome sequence of Yersinia pseudotuberculosis IP31758, the causative agent of Far East scarlet-like fever.</title>
        <authorList>
            <person name="Eppinger M."/>
            <person name="Rosovitz M.J."/>
            <person name="Fricke W.F."/>
            <person name="Rasko D.A."/>
            <person name="Kokorina G."/>
            <person name="Fayolle C."/>
            <person name="Lindler L.E."/>
            <person name="Carniel E."/>
            <person name="Ravel J."/>
        </authorList>
    </citation>
    <scope>NUCLEOTIDE SEQUENCE [LARGE SCALE GENOMIC DNA]</scope>
    <source>
        <strain>IP 31758</strain>
    </source>
</reference>
<name>ARNA_YERP3</name>
<evidence type="ECO:0000255" key="1">
    <source>
        <dbReference type="HAMAP-Rule" id="MF_01166"/>
    </source>
</evidence>
<dbReference type="EC" id="2.1.2.13" evidence="1"/>
<dbReference type="EC" id="1.1.1.305" evidence="1"/>
<dbReference type="EMBL" id="CP000720">
    <property type="protein sequence ID" value="ABS47824.1"/>
    <property type="molecule type" value="Genomic_DNA"/>
</dbReference>
<dbReference type="RefSeq" id="WP_011192542.1">
    <property type="nucleotide sequence ID" value="NC_009708.1"/>
</dbReference>
<dbReference type="SMR" id="A7FHH4"/>
<dbReference type="KEGG" id="ypi:YpsIP31758_1727"/>
<dbReference type="HOGENOM" id="CLU_007383_23_2_6"/>
<dbReference type="UniPathway" id="UPA00030"/>
<dbReference type="UniPathway" id="UPA00032">
    <property type="reaction ID" value="UER00492"/>
</dbReference>
<dbReference type="UniPathway" id="UPA00032">
    <property type="reaction ID" value="UER00494"/>
</dbReference>
<dbReference type="Proteomes" id="UP000002412">
    <property type="component" value="Chromosome"/>
</dbReference>
<dbReference type="GO" id="GO:0016020">
    <property type="term" value="C:membrane"/>
    <property type="evidence" value="ECO:0007669"/>
    <property type="project" value="GOC"/>
</dbReference>
<dbReference type="GO" id="GO:0016831">
    <property type="term" value="F:carboxy-lyase activity"/>
    <property type="evidence" value="ECO:0007669"/>
    <property type="project" value="InterPro"/>
</dbReference>
<dbReference type="GO" id="GO:0099619">
    <property type="term" value="F:UDP-4-amino-4-deoxy-L-arabinose formyltransferase activity"/>
    <property type="evidence" value="ECO:0007669"/>
    <property type="project" value="UniProtKB-EC"/>
</dbReference>
<dbReference type="GO" id="GO:0099618">
    <property type="term" value="F:UDP-glucuronate dehydrogenase activity"/>
    <property type="evidence" value="ECO:0007669"/>
    <property type="project" value="UniProtKB-EC"/>
</dbReference>
<dbReference type="GO" id="GO:0009245">
    <property type="term" value="P:lipid A biosynthetic process"/>
    <property type="evidence" value="ECO:0007669"/>
    <property type="project" value="UniProtKB-KW"/>
</dbReference>
<dbReference type="GO" id="GO:0009103">
    <property type="term" value="P:lipopolysaccharide biosynthetic process"/>
    <property type="evidence" value="ECO:0007669"/>
    <property type="project" value="UniProtKB-UniRule"/>
</dbReference>
<dbReference type="GO" id="GO:0046677">
    <property type="term" value="P:response to antibiotic"/>
    <property type="evidence" value="ECO:0007669"/>
    <property type="project" value="UniProtKB-KW"/>
</dbReference>
<dbReference type="CDD" id="cd08702">
    <property type="entry name" value="Arna_FMT_C"/>
    <property type="match status" value="1"/>
</dbReference>
<dbReference type="CDD" id="cd05257">
    <property type="entry name" value="Arna_like_SDR_e"/>
    <property type="match status" value="1"/>
</dbReference>
<dbReference type="FunFam" id="3.40.50.720:FF:000197">
    <property type="entry name" value="Bifunctional polymyxin resistance protein ArnA"/>
    <property type="match status" value="1"/>
</dbReference>
<dbReference type="Gene3D" id="3.40.50.12230">
    <property type="match status" value="1"/>
</dbReference>
<dbReference type="Gene3D" id="3.40.50.720">
    <property type="entry name" value="NAD(P)-binding Rossmann-like Domain"/>
    <property type="match status" value="1"/>
</dbReference>
<dbReference type="HAMAP" id="MF_01166">
    <property type="entry name" value="ArnA"/>
    <property type="match status" value="1"/>
</dbReference>
<dbReference type="InterPro" id="IPR045869">
    <property type="entry name" value="Arna-like_SDR_e"/>
</dbReference>
<dbReference type="InterPro" id="IPR021168">
    <property type="entry name" value="Bifun_polymyxin_resist_ArnA"/>
</dbReference>
<dbReference type="InterPro" id="IPR001509">
    <property type="entry name" value="Epimerase_deHydtase"/>
</dbReference>
<dbReference type="InterPro" id="IPR005793">
    <property type="entry name" value="Formyl_trans_C"/>
</dbReference>
<dbReference type="InterPro" id="IPR002376">
    <property type="entry name" value="Formyl_transf_N"/>
</dbReference>
<dbReference type="InterPro" id="IPR036477">
    <property type="entry name" value="Formyl_transf_N_sf"/>
</dbReference>
<dbReference type="InterPro" id="IPR011034">
    <property type="entry name" value="Formyl_transferase-like_C_sf"/>
</dbReference>
<dbReference type="InterPro" id="IPR050177">
    <property type="entry name" value="Lipid_A_modif_metabolic_enz"/>
</dbReference>
<dbReference type="InterPro" id="IPR036291">
    <property type="entry name" value="NAD(P)-bd_dom_sf"/>
</dbReference>
<dbReference type="NCBIfam" id="NF005414">
    <property type="entry name" value="PRK06988.1"/>
    <property type="match status" value="1"/>
</dbReference>
<dbReference type="NCBIfam" id="NF005998">
    <property type="entry name" value="PRK08125.1"/>
    <property type="match status" value="1"/>
</dbReference>
<dbReference type="NCBIfam" id="NF008872">
    <property type="entry name" value="PRK11908.1"/>
    <property type="match status" value="1"/>
</dbReference>
<dbReference type="PANTHER" id="PTHR43245">
    <property type="entry name" value="BIFUNCTIONAL POLYMYXIN RESISTANCE PROTEIN ARNA"/>
    <property type="match status" value="1"/>
</dbReference>
<dbReference type="PANTHER" id="PTHR43245:SF13">
    <property type="entry name" value="UDP-D-APIOSE_UDP-D-XYLOSE SYNTHASE 2"/>
    <property type="match status" value="1"/>
</dbReference>
<dbReference type="Pfam" id="PF01370">
    <property type="entry name" value="Epimerase"/>
    <property type="match status" value="1"/>
</dbReference>
<dbReference type="Pfam" id="PF02911">
    <property type="entry name" value="Formyl_trans_C"/>
    <property type="match status" value="1"/>
</dbReference>
<dbReference type="Pfam" id="PF00551">
    <property type="entry name" value="Formyl_trans_N"/>
    <property type="match status" value="1"/>
</dbReference>
<dbReference type="PIRSF" id="PIRSF036506">
    <property type="entry name" value="Bifun_polymyxin_resist_ArnA"/>
    <property type="match status" value="1"/>
</dbReference>
<dbReference type="SUPFAM" id="SSF50486">
    <property type="entry name" value="FMT C-terminal domain-like"/>
    <property type="match status" value="1"/>
</dbReference>
<dbReference type="SUPFAM" id="SSF53328">
    <property type="entry name" value="Formyltransferase"/>
    <property type="match status" value="1"/>
</dbReference>
<dbReference type="SUPFAM" id="SSF51735">
    <property type="entry name" value="NAD(P)-binding Rossmann-fold domains"/>
    <property type="match status" value="1"/>
</dbReference>
<accession>A7FHH4</accession>
<comment type="function">
    <text evidence="1">Bifunctional enzyme that catalyzes the oxidative decarboxylation of UDP-glucuronic acid (UDP-GlcUA) to UDP-4-keto-arabinose (UDP-Ara4O) and the addition of a formyl group to UDP-4-amino-4-deoxy-L-arabinose (UDP-L-Ara4N) to form UDP-L-4-formamido-arabinose (UDP-L-Ara4FN). The modified arabinose is attached to lipid A and is required for resistance to polymyxin and cationic antimicrobial peptides.</text>
</comment>
<comment type="catalytic activity">
    <reaction evidence="1">
        <text>UDP-alpha-D-glucuronate + NAD(+) = UDP-beta-L-threo-pentopyranos-4-ulose + CO2 + NADH</text>
        <dbReference type="Rhea" id="RHEA:24702"/>
        <dbReference type="ChEBI" id="CHEBI:16526"/>
        <dbReference type="ChEBI" id="CHEBI:57540"/>
        <dbReference type="ChEBI" id="CHEBI:57945"/>
        <dbReference type="ChEBI" id="CHEBI:58052"/>
        <dbReference type="ChEBI" id="CHEBI:58710"/>
        <dbReference type="EC" id="1.1.1.305"/>
    </reaction>
</comment>
<comment type="catalytic activity">
    <reaction evidence="1">
        <text>UDP-4-amino-4-deoxy-beta-L-arabinose + (6R)-10-formyltetrahydrofolate = UDP-4-deoxy-4-formamido-beta-L-arabinose + (6S)-5,6,7,8-tetrahydrofolate + H(+)</text>
        <dbReference type="Rhea" id="RHEA:24706"/>
        <dbReference type="ChEBI" id="CHEBI:15378"/>
        <dbReference type="ChEBI" id="CHEBI:57453"/>
        <dbReference type="ChEBI" id="CHEBI:58708"/>
        <dbReference type="ChEBI" id="CHEBI:58709"/>
        <dbReference type="ChEBI" id="CHEBI:195366"/>
        <dbReference type="EC" id="2.1.2.13"/>
    </reaction>
</comment>
<comment type="pathway">
    <text evidence="1">Nucleotide-sugar biosynthesis; UDP-4-deoxy-4-formamido-beta-L-arabinose biosynthesis; UDP-4-deoxy-4-formamido-beta-L-arabinose from UDP-alpha-D-glucuronate: step 1/3.</text>
</comment>
<comment type="pathway">
    <text evidence="1">Nucleotide-sugar biosynthesis; UDP-4-deoxy-4-formamido-beta-L-arabinose biosynthesis; UDP-4-deoxy-4-formamido-beta-L-arabinose from UDP-alpha-D-glucuronate: step 3/3.</text>
</comment>
<comment type="pathway">
    <text evidence="1">Bacterial outer membrane biogenesis; lipopolysaccharide biosynthesis.</text>
</comment>
<comment type="subunit">
    <text evidence="1">Homohexamer, formed by a dimer of trimers.</text>
</comment>
<comment type="similarity">
    <text evidence="1">In the N-terminal section; belongs to the Fmt family. UDP-L-Ara4N formyltransferase subfamily.</text>
</comment>
<comment type="similarity">
    <text evidence="1">In the C-terminal section; belongs to the NAD(P)-dependent epimerase/dehydratase family. UDP-glucuronic acid decarboxylase subfamily.</text>
</comment>
<organism>
    <name type="scientific">Yersinia pseudotuberculosis serotype O:1b (strain IP 31758)</name>
    <dbReference type="NCBI Taxonomy" id="349747"/>
    <lineage>
        <taxon>Bacteria</taxon>
        <taxon>Pseudomonadati</taxon>
        <taxon>Pseudomonadota</taxon>
        <taxon>Gammaproteobacteria</taxon>
        <taxon>Enterobacterales</taxon>
        <taxon>Yersiniaceae</taxon>
        <taxon>Yersinia</taxon>
    </lineage>
</organism>
<sequence>MKAIVFAYHDIGCVGLNALAEAGYDIQAVFTHTDNPGENRFFSSVARVAADLALPVFAPEDVNHPLWVERIRELQPDIIFSFYYRNMLSDEILSLAPQGGFNLHGSLLPQYRGRAPINWVLVNGETETGVTLHQMVKKADAGPIAGQYKVAISDVDTALTLHAKMRDAAQELLRNLLPRMKEGPLPLTPQKEADASYFGRRTAADGEIHWQKSAFTINNLVRAVTEPYPGAFSYLGQRKLTIWRSRPLDLVHNKLPGTVLSTAPLTVACGEGALEIITGQGEAGLYVQGDRLAQEMGIVTDVRLGNKPSNTLKRRTRVLILGVNGFIGNHLTERLLQDDRYEVYGLDIGSDAISRFLGNPAFHFVEGDISIHSEWIEYHIKKCDVILPLVAIATPIEYTRNPLRVFELDFEENLKIVRDCVKYNKRIVFPSTSEVYGMCDDKEFDEDTSRLIVGPINKQRWIYSVSKQLLDRVIWAYGVKEGLKFTLFRPFNWMGPRLDNLDAARIGSSRAITQLILNLVEGSPIKLVDGGAQKRCFTDIHDGIEALFRIIENRDGCCDGQIINIGNPTNEASIRELAEMLLTSFENHELRDHFPPFAGFKDIESSAYYGKGYQDVEYRTPSIKNARRILHWQPEIAMQQTVTETLDFFLRAAVIEKTAAPKDELNA</sequence>
<gene>
    <name evidence="1" type="primary">arnA</name>
    <name type="ordered locus">YpsIP31758_1727</name>
</gene>
<feature type="chain" id="PRO_1000065680" description="Bifunctional polymyxin resistance protein ArnA">
    <location>
        <begin position="1"/>
        <end position="667"/>
    </location>
</feature>
<feature type="region of interest" description="Formyltransferase ArnAFT">
    <location>
        <begin position="1"/>
        <end position="304"/>
    </location>
</feature>
<feature type="region of interest" description="Dehydrogenase ArnADH">
    <location>
        <begin position="314"/>
        <end position="667"/>
    </location>
</feature>
<feature type="active site" description="Proton donor; for formyltransferase activity" evidence="1">
    <location>
        <position position="104"/>
    </location>
</feature>
<feature type="active site" description="Proton acceptor; for decarboxylase activity" evidence="1">
    <location>
        <position position="434"/>
    </location>
</feature>
<feature type="active site" description="Proton donor; for decarboxylase activity" evidence="1">
    <location>
        <position position="619"/>
    </location>
</feature>
<feature type="binding site" evidence="1">
    <location>
        <position position="114"/>
    </location>
    <ligand>
        <name>(6R)-10-formyltetrahydrofolate</name>
        <dbReference type="ChEBI" id="CHEBI:195366"/>
    </ligand>
</feature>
<feature type="binding site" evidence="1">
    <location>
        <begin position="136"/>
        <end position="140"/>
    </location>
    <ligand>
        <name>(6R)-10-formyltetrahydrofolate</name>
        <dbReference type="ChEBI" id="CHEBI:195366"/>
    </ligand>
</feature>
<feature type="binding site" evidence="1">
    <location>
        <position position="347"/>
    </location>
    <ligand>
        <name>NAD(+)</name>
        <dbReference type="ChEBI" id="CHEBI:57540"/>
    </ligand>
</feature>
<feature type="binding site" evidence="1">
    <location>
        <begin position="368"/>
        <end position="369"/>
    </location>
    <ligand>
        <name>NAD(+)</name>
        <dbReference type="ChEBI" id="CHEBI:57540"/>
    </ligand>
</feature>
<feature type="binding site" evidence="1">
    <location>
        <position position="393"/>
    </location>
    <ligand>
        <name>UDP-alpha-D-glucuronate</name>
        <dbReference type="ChEBI" id="CHEBI:58052"/>
    </ligand>
</feature>
<feature type="binding site" evidence="1">
    <location>
        <position position="398"/>
    </location>
    <ligand>
        <name>UDP-alpha-D-glucuronate</name>
        <dbReference type="ChEBI" id="CHEBI:58052"/>
    </ligand>
</feature>
<feature type="binding site" evidence="1">
    <location>
        <begin position="432"/>
        <end position="433"/>
    </location>
    <ligand>
        <name>UDP-alpha-D-glucuronate</name>
        <dbReference type="ChEBI" id="CHEBI:58052"/>
    </ligand>
</feature>
<feature type="binding site" evidence="1">
    <location>
        <position position="460"/>
    </location>
    <ligand>
        <name>UDP-alpha-D-glucuronate</name>
        <dbReference type="ChEBI" id="CHEBI:58052"/>
    </ligand>
</feature>
<feature type="binding site" evidence="1">
    <location>
        <position position="492"/>
    </location>
    <ligand>
        <name>UDP-alpha-D-glucuronate</name>
        <dbReference type="ChEBI" id="CHEBI:58052"/>
    </ligand>
</feature>
<feature type="binding site" evidence="1">
    <location>
        <begin position="526"/>
        <end position="535"/>
    </location>
    <ligand>
        <name>UDP-alpha-D-glucuronate</name>
        <dbReference type="ChEBI" id="CHEBI:58052"/>
    </ligand>
</feature>
<feature type="binding site" evidence="1">
    <location>
        <position position="613"/>
    </location>
    <ligand>
        <name>UDP-alpha-D-glucuronate</name>
        <dbReference type="ChEBI" id="CHEBI:58052"/>
    </ligand>
</feature>
<feature type="site" description="Transition state stabilizer" evidence="1">
    <location>
        <position position="102"/>
    </location>
</feature>
<feature type="site" description="Raises pKa of active site His" evidence="1">
    <location>
        <position position="140"/>
    </location>
</feature>
<protein>
    <recommendedName>
        <fullName evidence="1">Bifunctional polymyxin resistance protein ArnA</fullName>
    </recommendedName>
    <domain>
        <recommendedName>
            <fullName evidence="1">UDP-4-amino-4-deoxy-L-arabinose formyltransferase</fullName>
            <ecNumber evidence="1">2.1.2.13</ecNumber>
        </recommendedName>
        <alternativeName>
            <fullName evidence="1">ArnAFT</fullName>
        </alternativeName>
        <alternativeName>
            <fullName evidence="1">UDP-L-Ara4N formyltransferase</fullName>
        </alternativeName>
    </domain>
    <domain>
        <recommendedName>
            <fullName evidence="1">UDP-glucuronic acid oxidase, UDP-4-keto-hexauronic acid decarboxylating</fullName>
            <ecNumber evidence="1">1.1.1.305</ecNumber>
        </recommendedName>
        <alternativeName>
            <fullName evidence="1">ArnADH</fullName>
        </alternativeName>
        <alternativeName>
            <fullName evidence="1">UDP-GlcUA decarboxylase</fullName>
        </alternativeName>
        <alternativeName>
            <fullName evidence="1">UDP-glucuronic acid dehydrogenase</fullName>
        </alternativeName>
    </domain>
</protein>
<keyword id="KW-0046">Antibiotic resistance</keyword>
<keyword id="KW-0441">Lipid A biosynthesis</keyword>
<keyword id="KW-0444">Lipid biosynthesis</keyword>
<keyword id="KW-0443">Lipid metabolism</keyword>
<keyword id="KW-0448">Lipopolysaccharide biosynthesis</keyword>
<keyword id="KW-0511">Multifunctional enzyme</keyword>
<keyword id="KW-0520">NAD</keyword>
<keyword id="KW-0560">Oxidoreductase</keyword>
<keyword id="KW-0808">Transferase</keyword>